<dbReference type="EMBL" id="AJ238148">
    <property type="protein sequence ID" value="CAB41406.1"/>
    <property type="molecule type" value="mRNA"/>
</dbReference>
<dbReference type="VEuPathDB" id="FungiDB:PC9H_001985"/>
<dbReference type="VEuPathDB" id="FungiDB:PLEOSDRAFT_1114379"/>
<dbReference type="GO" id="GO:0005576">
    <property type="term" value="C:extracellular region"/>
    <property type="evidence" value="ECO:0007669"/>
    <property type="project" value="UniProtKB-KW"/>
</dbReference>
<dbReference type="GO" id="GO:0009277">
    <property type="term" value="C:fungal-type cell wall"/>
    <property type="evidence" value="ECO:0007669"/>
    <property type="project" value="InterPro"/>
</dbReference>
<dbReference type="GO" id="GO:0005199">
    <property type="term" value="F:structural constituent of cell wall"/>
    <property type="evidence" value="ECO:0007669"/>
    <property type="project" value="InterPro"/>
</dbReference>
<dbReference type="CDD" id="cd23507">
    <property type="entry name" value="hydrophobin_I"/>
    <property type="match status" value="1"/>
</dbReference>
<dbReference type="InterPro" id="IPR001338">
    <property type="entry name" value="Hydrophobin"/>
</dbReference>
<dbReference type="InterPro" id="IPR019778">
    <property type="entry name" value="Hydrophobin_CS"/>
</dbReference>
<dbReference type="Pfam" id="PF01185">
    <property type="entry name" value="Hydrophobin"/>
    <property type="match status" value="1"/>
</dbReference>
<dbReference type="SMART" id="SM00075">
    <property type="entry name" value="HYDRO"/>
    <property type="match status" value="1"/>
</dbReference>
<dbReference type="PROSITE" id="PS00956">
    <property type="entry name" value="HYDROPHOBIN"/>
    <property type="match status" value="1"/>
</dbReference>
<feature type="signal peptide" evidence="2">
    <location>
        <begin position="1"/>
        <end position="17"/>
    </location>
</feature>
<feature type="chain" id="PRO_5013984331" description="Class I hydrophobin 3">
    <location>
        <begin position="18"/>
        <end position="108"/>
    </location>
</feature>
<feature type="glycosylation site" description="N-linked (GlcNAc...) asparagine" evidence="3">
    <location>
        <position position="37"/>
    </location>
</feature>
<feature type="disulfide bond" evidence="1">
    <location>
        <begin position="28"/>
        <end position="87"/>
    </location>
</feature>
<feature type="disulfide bond" evidence="1">
    <location>
        <begin position="35"/>
        <end position="81"/>
    </location>
</feature>
<feature type="disulfide bond" evidence="1">
    <location>
        <begin position="36"/>
        <end position="69"/>
    </location>
</feature>
<feature type="disulfide bond" evidence="1">
    <location>
        <begin position="88"/>
        <end position="101"/>
    </location>
</feature>
<evidence type="ECO:0000250" key="1">
    <source>
        <dbReference type="UniProtKB" id="Q04571"/>
    </source>
</evidence>
<evidence type="ECO:0000255" key="2"/>
<evidence type="ECO:0000255" key="3">
    <source>
        <dbReference type="PROSITE-ProRule" id="PRU00498"/>
    </source>
</evidence>
<evidence type="ECO:0000269" key="4">
    <source>
    </source>
</evidence>
<evidence type="ECO:0000269" key="5">
    <source>
    </source>
</evidence>
<evidence type="ECO:0000269" key="6">
    <source>
    </source>
</evidence>
<evidence type="ECO:0000269" key="7">
    <source>
    </source>
</evidence>
<evidence type="ECO:0000269" key="8">
    <source>
    </source>
</evidence>
<evidence type="ECO:0000303" key="9">
    <source>
    </source>
</evidence>
<evidence type="ECO:0000305" key="10"/>
<gene>
    <name evidence="9" type="primary">vhm33</name>
</gene>
<protein>
    <recommendedName>
        <fullName evidence="9">Class I hydrophobin 3</fullName>
    </recommendedName>
</protein>
<accession>Q9Y7H0</accession>
<keyword id="KW-0134">Cell wall</keyword>
<keyword id="KW-1015">Disulfide bond</keyword>
<keyword id="KW-0325">Glycoprotein</keyword>
<keyword id="KW-0964">Secreted</keyword>
<keyword id="KW-0732">Signal</keyword>
<reference key="1">
    <citation type="journal article" date="1999" name="Appl. Environ. Microbiol.">
        <title>Molecular karyotype of the white rot fungus Pleurotus ostreatus.</title>
        <authorList>
            <person name="Larraya L.M."/>
            <person name="Perez G."/>
            <person name="Penas M.M."/>
            <person name="Baars J.J."/>
            <person name="Mikosch T.S."/>
            <person name="Pisabarro A.G."/>
            <person name="Ramirez L."/>
        </authorList>
    </citation>
    <scope>NUCLEOTIDE SEQUENCE [MRNA]</scope>
</reference>
<reference key="2">
    <citation type="journal article" date="2002" name="Appl. Environ. Microbiol.">
        <title>Differentially regulated, vegetative-mycelium-specific hydrophobins of the edible basidiomycete Pleurotus ostreatus.</title>
        <authorList>
            <person name="Penas M.M."/>
            <person name="Rust B."/>
            <person name="Larraya L.M."/>
            <person name="Ramirez L."/>
            <person name="Pisabarro A.G."/>
        </authorList>
    </citation>
    <scope>DEVELOPMENTAL STAGE</scope>
    <scope>INDUCTION</scope>
    <scope>FUNCTION</scope>
    <scope>SUBCELLULAR LOCATION</scope>
</reference>
<reference key="3">
    <citation type="journal article" date="2021" name="Microbiol. Res.">
        <title>Identification of hydrophobin genes and their physiological functions related to growth and development in Pleurotus ostreatus.</title>
        <authorList>
            <person name="Xu D."/>
            <person name="Wang Y."/>
            <person name="Keerio A.A."/>
            <person name="Ma A."/>
        </authorList>
    </citation>
    <scope>DEVELOPMENTAL STAGE</scope>
</reference>
<reference key="4">
    <citation type="journal article" date="2022" name="Protein Expr. Purif.">
        <title>Identification and characterization of a hydrophobin Vmh3 from Pleurotus ostreatus.</title>
        <authorList>
            <person name="Kulkarni S.S."/>
            <person name="Nene S.N."/>
            <person name="Joshi K.S."/>
        </authorList>
    </citation>
    <scope>SUBUNIT</scope>
    <scope>BIOTECHNOLOGY</scope>
</reference>
<reference key="5">
    <citation type="journal article" date="2023" name="FEMS Microbiol. Lett.">
        <title>Features of disruption mutants of genes encoding for hydrophobin Vmh2 and Vmh3 in mycelial formation and resistance to environmental stress in Pleurotus ostreatus.</title>
        <authorList>
            <person name="Han J."/>
            <person name="Kawauchi M."/>
            <person name="Schiphof K."/>
            <person name="Terauchi Y."/>
            <person name="Yoshimi A."/>
            <person name="Tanaka C."/>
            <person name="Nakazawa T."/>
            <person name="Honda Y."/>
        </authorList>
    </citation>
    <scope>FUNCTION</scope>
    <scope>DISRUPTION PHENOTYPE</scope>
</reference>
<reference key="6">
    <citation type="journal article" date="2023" name="Lett. Appl. Microbiol.">
        <title>Physiological function of hydrophobin Vmh3 in lignin degradation by white-rot fungus Pleurotus ostreatus.</title>
        <authorList>
            <person name="Han J."/>
            <person name="Kawauchi M."/>
            <person name="Terauchi Y."/>
            <person name="Yoshimi A."/>
            <person name="Tanaka C."/>
            <person name="Nakazawa T."/>
            <person name="Honda Y."/>
        </authorList>
    </citation>
    <scope>FUNCTION</scope>
    <scope>DISRUPTION PHENOTYPE</scope>
</reference>
<comment type="function">
    <text evidence="4 7 8 10">Aerial growth, conidiation, and dispersal of filamentous fungi in the environment rely upon a capability of their secreting small amphipathic proteins called hydrophobins (HPBs) with low sequence identity. Class I can self-assemble into an outermost layer of rodlet bundles on aerial cell surfaces, conferring cellular hydrophobicity that supports fungal growth, development and dispersal; whereas Class II form highly ordered films at water-air interfaces through intermolecular interactions but contribute nothing to the rodlet structure (Probable). Vmh3 is a class I hydrophobin that is essential for the maintenance of the surface hydrophobicity of the mycelium and might be involved in the development of fruiting bodies (PubMed:12147487, PubMed:37081785). Plays an important role in hyphal resistance against environmental stress (PubMed:37081785). Necessary for the efficient biodegradation of lignin (PubMed:37061783).</text>
</comment>
<comment type="subunit">
    <text evidence="6">Self-assembles to form functional amyloid fibrils called rodlets. Self-assembly into fibrillar rodlets occurs spontaneously at hydrophobic:hydrophilic interfaces and the rodlets further associate laterally to form amphipathic monolayers.</text>
</comment>
<comment type="subcellular location">
    <subcellularLocation>
        <location evidence="6">Secreted</location>
    </subcellularLocation>
    <subcellularLocation>
        <location evidence="6">Secreted</location>
        <location evidence="6">Cell wall</location>
    </subcellularLocation>
</comment>
<comment type="developmental stage">
    <text evidence="4 5">Highly expressed in both in monokaryotic and dikaryotic mycelia (PubMed:33636611). Expressed at the vegetative stage as well as in the fruiting bodies (PubMed:12147487).</text>
</comment>
<comment type="induction">
    <text evidence="4">Expressed throughout the culture in cell wall extracts, but increased when the aerial development becomes prominent (PubMed:12147487). Expression is impaired by carbon source limitation (PubMed:12147487).</text>
</comment>
<comment type="disruption phenotype">
    <text evidence="7 8">Alters the cell surface structure and mycelial hydrophobicity (PubMed:37061783, PubMed:37081785). Exhibits relatively slower aerial mycelia formation on a liquid medium and leads to slower growth under stress conditions involving SDS and H(2)O(2) (PubMed:37081785). Leads to a marked delay in lignin degradation on beech wood sawdust medium, while the production of lignin-modifying enzymes is not reduced (PubMed:37061783).</text>
</comment>
<comment type="biotechnology">
    <text evidence="6">Vmh3 can be efficiently used in surface modification applications such as antifouling agents, in modifications of biomaterials used as implants, in designing drug delivery systems for water-insoluble drugs, and also in food foams.</text>
</comment>
<comment type="similarity">
    <text evidence="10">Belongs to the fungal hydrophobin family.</text>
</comment>
<name>VMH3_PLEOS</name>
<proteinExistence type="evidence at protein level"/>
<organism>
    <name type="scientific">Pleurotus ostreatus</name>
    <name type="common">Oyster mushroom</name>
    <name type="synonym">White-rot fungus</name>
    <dbReference type="NCBI Taxonomy" id="5322"/>
    <lineage>
        <taxon>Eukaryota</taxon>
        <taxon>Fungi</taxon>
        <taxon>Dikarya</taxon>
        <taxon>Basidiomycota</taxon>
        <taxon>Agaricomycotina</taxon>
        <taxon>Agaricomycetes</taxon>
        <taxon>Agaricomycetidae</taxon>
        <taxon>Agaricales</taxon>
        <taxon>Pleurotineae</taxon>
        <taxon>Pleurotaceae</taxon>
        <taxon>Pleurotus</taxon>
    </lineage>
</organism>
<sequence length="108" mass="11210">MFFQTTIVAALAFLAVATPLALRTDSRCNTESVKCCNKSEDAETFKKSASAALIPIKIGDITGKVYSECSPIVGLIGGSSCSAQTVCCDNAKFNGLVNIGCTPINVAL</sequence>